<reference key="1">
    <citation type="submission" date="2007-04" db="EMBL/GenBank/DDBJ databases">
        <title>Complete sequence of Pseudomonas mendocina ymp.</title>
        <authorList>
            <consortium name="US DOE Joint Genome Institute"/>
            <person name="Copeland A."/>
            <person name="Lucas S."/>
            <person name="Lapidus A."/>
            <person name="Barry K."/>
            <person name="Glavina del Rio T."/>
            <person name="Dalin E."/>
            <person name="Tice H."/>
            <person name="Pitluck S."/>
            <person name="Kiss H."/>
            <person name="Brettin T."/>
            <person name="Detter J.C."/>
            <person name="Bruce D."/>
            <person name="Han C."/>
            <person name="Schmutz J."/>
            <person name="Larimer F."/>
            <person name="Land M."/>
            <person name="Hauser L."/>
            <person name="Kyrpides N."/>
            <person name="Mikhailova N."/>
            <person name="Hersman L."/>
            <person name="Dubois J."/>
            <person name="Maurice P."/>
            <person name="Richardson P."/>
        </authorList>
    </citation>
    <scope>NUCLEOTIDE SEQUENCE [LARGE SCALE GENOMIC DNA]</scope>
    <source>
        <strain>ymp</strain>
    </source>
</reference>
<dbReference type="EC" id="2.4.2.18" evidence="1"/>
<dbReference type="EMBL" id="CP000680">
    <property type="protein sequence ID" value="ABP86692.1"/>
    <property type="molecule type" value="Genomic_DNA"/>
</dbReference>
<dbReference type="SMR" id="A4XZC6"/>
<dbReference type="STRING" id="399739.Pmen_3945"/>
<dbReference type="KEGG" id="pmy:Pmen_3945"/>
<dbReference type="PATRIC" id="fig|399739.8.peg.3998"/>
<dbReference type="eggNOG" id="COG0547">
    <property type="taxonomic scope" value="Bacteria"/>
</dbReference>
<dbReference type="HOGENOM" id="CLU_034315_2_1_6"/>
<dbReference type="OrthoDB" id="9806430at2"/>
<dbReference type="UniPathway" id="UPA00035">
    <property type="reaction ID" value="UER00041"/>
</dbReference>
<dbReference type="GO" id="GO:0005829">
    <property type="term" value="C:cytosol"/>
    <property type="evidence" value="ECO:0007669"/>
    <property type="project" value="TreeGrafter"/>
</dbReference>
<dbReference type="GO" id="GO:0004048">
    <property type="term" value="F:anthranilate phosphoribosyltransferase activity"/>
    <property type="evidence" value="ECO:0007669"/>
    <property type="project" value="UniProtKB-UniRule"/>
</dbReference>
<dbReference type="GO" id="GO:0000287">
    <property type="term" value="F:magnesium ion binding"/>
    <property type="evidence" value="ECO:0007669"/>
    <property type="project" value="UniProtKB-UniRule"/>
</dbReference>
<dbReference type="GO" id="GO:0000162">
    <property type="term" value="P:L-tryptophan biosynthetic process"/>
    <property type="evidence" value="ECO:0007669"/>
    <property type="project" value="UniProtKB-UniRule"/>
</dbReference>
<dbReference type="FunFam" id="1.20.970.10:FF:000006">
    <property type="entry name" value="Anthranilate phosphoribosyltransferase"/>
    <property type="match status" value="1"/>
</dbReference>
<dbReference type="FunFam" id="3.40.1030.10:FF:000002">
    <property type="entry name" value="Anthranilate phosphoribosyltransferase"/>
    <property type="match status" value="1"/>
</dbReference>
<dbReference type="Gene3D" id="3.40.1030.10">
    <property type="entry name" value="Nucleoside phosphorylase/phosphoribosyltransferase catalytic domain"/>
    <property type="match status" value="1"/>
</dbReference>
<dbReference type="Gene3D" id="1.20.970.10">
    <property type="entry name" value="Transferase, Pyrimidine Nucleoside Phosphorylase, Chain C"/>
    <property type="match status" value="1"/>
</dbReference>
<dbReference type="HAMAP" id="MF_00211">
    <property type="entry name" value="TrpD"/>
    <property type="match status" value="1"/>
</dbReference>
<dbReference type="InterPro" id="IPR005940">
    <property type="entry name" value="Anthranilate_Pribosyl_Tfrase"/>
</dbReference>
<dbReference type="InterPro" id="IPR000312">
    <property type="entry name" value="Glycosyl_Trfase_fam3"/>
</dbReference>
<dbReference type="InterPro" id="IPR017459">
    <property type="entry name" value="Glycosyl_Trfase_fam3_N_dom"/>
</dbReference>
<dbReference type="InterPro" id="IPR036320">
    <property type="entry name" value="Glycosyl_Trfase_fam3_N_dom_sf"/>
</dbReference>
<dbReference type="InterPro" id="IPR035902">
    <property type="entry name" value="Nuc_phospho_transferase"/>
</dbReference>
<dbReference type="NCBIfam" id="TIGR01245">
    <property type="entry name" value="trpD"/>
    <property type="match status" value="1"/>
</dbReference>
<dbReference type="PANTHER" id="PTHR43285">
    <property type="entry name" value="ANTHRANILATE PHOSPHORIBOSYLTRANSFERASE"/>
    <property type="match status" value="1"/>
</dbReference>
<dbReference type="PANTHER" id="PTHR43285:SF2">
    <property type="entry name" value="ANTHRANILATE PHOSPHORIBOSYLTRANSFERASE"/>
    <property type="match status" value="1"/>
</dbReference>
<dbReference type="Pfam" id="PF02885">
    <property type="entry name" value="Glycos_trans_3N"/>
    <property type="match status" value="1"/>
</dbReference>
<dbReference type="Pfam" id="PF00591">
    <property type="entry name" value="Glycos_transf_3"/>
    <property type="match status" value="1"/>
</dbReference>
<dbReference type="SUPFAM" id="SSF52418">
    <property type="entry name" value="Nucleoside phosphorylase/phosphoribosyltransferase catalytic domain"/>
    <property type="match status" value="1"/>
</dbReference>
<dbReference type="SUPFAM" id="SSF47648">
    <property type="entry name" value="Nucleoside phosphorylase/phosphoribosyltransferase N-terminal domain"/>
    <property type="match status" value="1"/>
</dbReference>
<protein>
    <recommendedName>
        <fullName evidence="1">Anthranilate phosphoribosyltransferase</fullName>
        <ecNumber evidence="1">2.4.2.18</ecNumber>
    </recommendedName>
</protein>
<gene>
    <name evidence="1" type="primary">trpD</name>
    <name type="ordered locus">Pmen_3945</name>
</gene>
<organism>
    <name type="scientific">Ectopseudomonas mendocina (strain ymp)</name>
    <name type="common">Pseudomonas mendocina</name>
    <dbReference type="NCBI Taxonomy" id="399739"/>
    <lineage>
        <taxon>Bacteria</taxon>
        <taxon>Pseudomonadati</taxon>
        <taxon>Pseudomonadota</taxon>
        <taxon>Gammaproteobacteria</taxon>
        <taxon>Pseudomonadales</taxon>
        <taxon>Pseudomonadaceae</taxon>
        <taxon>Ectopseudomonas</taxon>
    </lineage>
</organism>
<proteinExistence type="inferred from homology"/>
<evidence type="ECO:0000255" key="1">
    <source>
        <dbReference type="HAMAP-Rule" id="MF_00211"/>
    </source>
</evidence>
<name>TRPD_ECTM1</name>
<accession>A4XZC6</accession>
<keyword id="KW-0028">Amino-acid biosynthesis</keyword>
<keyword id="KW-0057">Aromatic amino acid biosynthesis</keyword>
<keyword id="KW-0328">Glycosyltransferase</keyword>
<keyword id="KW-0460">Magnesium</keyword>
<keyword id="KW-0479">Metal-binding</keyword>
<keyword id="KW-0808">Transferase</keyword>
<keyword id="KW-0822">Tryptophan biosynthesis</keyword>
<sequence length="348" mass="36995">MNIKEALNRIVAQLDLTTEEMQAVMREIMTGQCTDAQIGAFLMGMRMKSETIDEIVGAASVMRELAAPVVIDAERLVDTCGTGGDGMNIFNVSTAAAFVVAAAGGKVAKHGNRAVSGKSGSADLLEAAGVYLGLKPEQVARCVESVGVGFMFAPSHHGAMKHAIGPRRELGLRTIFNMLGPMTNPAGARHQVIGVFSQALCRPMAEVLQRLGSEHVLVVHAQDGLDEISLAAPTFVAELKDGKVSEYRIQPEDFAIKSQSLIGLTVDNAEQSLELIRDALGRRKTENGQKAADMIVLNAGAALYAADHASSLREGVQLAHDALHTGLAREKLEELVSLTAVFKQENEG</sequence>
<feature type="chain" id="PRO_1000043050" description="Anthranilate phosphoribosyltransferase">
    <location>
        <begin position="1"/>
        <end position="348"/>
    </location>
</feature>
<feature type="binding site" evidence="1">
    <location>
        <position position="81"/>
    </location>
    <ligand>
        <name>5-phospho-alpha-D-ribose 1-diphosphate</name>
        <dbReference type="ChEBI" id="CHEBI:58017"/>
    </ligand>
</feature>
<feature type="binding site" evidence="1">
    <location>
        <position position="81"/>
    </location>
    <ligand>
        <name>anthranilate</name>
        <dbReference type="ChEBI" id="CHEBI:16567"/>
        <label>1</label>
    </ligand>
</feature>
<feature type="binding site" evidence="1">
    <location>
        <begin position="84"/>
        <end position="85"/>
    </location>
    <ligand>
        <name>5-phospho-alpha-D-ribose 1-diphosphate</name>
        <dbReference type="ChEBI" id="CHEBI:58017"/>
    </ligand>
</feature>
<feature type="binding site" evidence="1">
    <location>
        <begin position="91"/>
        <end position="94"/>
    </location>
    <ligand>
        <name>5-phospho-alpha-D-ribose 1-diphosphate</name>
        <dbReference type="ChEBI" id="CHEBI:58017"/>
    </ligand>
</feature>
<feature type="binding site" evidence="1">
    <location>
        <position position="93"/>
    </location>
    <ligand>
        <name>Mg(2+)</name>
        <dbReference type="ChEBI" id="CHEBI:18420"/>
        <label>1</label>
    </ligand>
</feature>
<feature type="binding site" evidence="1">
    <location>
        <begin position="109"/>
        <end position="117"/>
    </location>
    <ligand>
        <name>5-phospho-alpha-D-ribose 1-diphosphate</name>
        <dbReference type="ChEBI" id="CHEBI:58017"/>
    </ligand>
</feature>
<feature type="binding site" evidence="1">
    <location>
        <position position="112"/>
    </location>
    <ligand>
        <name>anthranilate</name>
        <dbReference type="ChEBI" id="CHEBI:16567"/>
        <label>1</label>
    </ligand>
</feature>
<feature type="binding site" evidence="1">
    <location>
        <position position="121"/>
    </location>
    <ligand>
        <name>5-phospho-alpha-D-ribose 1-diphosphate</name>
        <dbReference type="ChEBI" id="CHEBI:58017"/>
    </ligand>
</feature>
<feature type="binding site" evidence="1">
    <location>
        <position position="167"/>
    </location>
    <ligand>
        <name>anthranilate</name>
        <dbReference type="ChEBI" id="CHEBI:16567"/>
        <label>2</label>
    </ligand>
</feature>
<feature type="binding site" evidence="1">
    <location>
        <position position="226"/>
    </location>
    <ligand>
        <name>Mg(2+)</name>
        <dbReference type="ChEBI" id="CHEBI:18420"/>
        <label>2</label>
    </ligand>
</feature>
<feature type="binding site" evidence="1">
    <location>
        <position position="227"/>
    </location>
    <ligand>
        <name>Mg(2+)</name>
        <dbReference type="ChEBI" id="CHEBI:18420"/>
        <label>1</label>
    </ligand>
</feature>
<feature type="binding site" evidence="1">
    <location>
        <position position="227"/>
    </location>
    <ligand>
        <name>Mg(2+)</name>
        <dbReference type="ChEBI" id="CHEBI:18420"/>
        <label>2</label>
    </ligand>
</feature>
<comment type="function">
    <text evidence="1">Catalyzes the transfer of the phosphoribosyl group of 5-phosphorylribose-1-pyrophosphate (PRPP) to anthranilate to yield N-(5'-phosphoribosyl)-anthranilate (PRA).</text>
</comment>
<comment type="catalytic activity">
    <reaction evidence="1">
        <text>N-(5-phospho-beta-D-ribosyl)anthranilate + diphosphate = 5-phospho-alpha-D-ribose 1-diphosphate + anthranilate</text>
        <dbReference type="Rhea" id="RHEA:11768"/>
        <dbReference type="ChEBI" id="CHEBI:16567"/>
        <dbReference type="ChEBI" id="CHEBI:18277"/>
        <dbReference type="ChEBI" id="CHEBI:33019"/>
        <dbReference type="ChEBI" id="CHEBI:58017"/>
        <dbReference type="EC" id="2.4.2.18"/>
    </reaction>
</comment>
<comment type="cofactor">
    <cofactor evidence="1">
        <name>Mg(2+)</name>
        <dbReference type="ChEBI" id="CHEBI:18420"/>
    </cofactor>
    <text evidence="1">Binds 2 magnesium ions per monomer.</text>
</comment>
<comment type="pathway">
    <text evidence="1">Amino-acid biosynthesis; L-tryptophan biosynthesis; L-tryptophan from chorismate: step 2/5.</text>
</comment>
<comment type="subunit">
    <text evidence="1">Homodimer.</text>
</comment>
<comment type="similarity">
    <text evidence="1">Belongs to the anthranilate phosphoribosyltransferase family.</text>
</comment>